<comment type="function">
    <text evidence="1 4 5">Belongs to an adhesion system, which plays a role in the organization of homotypic, interneuronal and heterotypic cell-cell adherens junctions (AJs). May connect the nectin-afadin and E-cadherin-catenin system through alpha-actinin and may be involved in organization of the actin cytoskeleton at AJs through afadin and alpha-actinin (PubMed:12446711). Acts as a centrosome maturation factor, probably by maintaining the integrity of the pericentriolar material and proper microtubule nucleation at mitotic spindle poles. The function seems to implicate at least in part WRAP73; the SSX2IP:WRAP73 complex is proposed to act as regulator of spindle anchoring at the mitotic centrosome (By similarity). Involved in cell movement: localizes at the leading edge of moving cells in response to PDGF and is required for the formation of the leading edge and the promotion of cell movement, possibly via activation of Rac signaling (PubMed:22027834). Involved in ciliogenesis (By similarity). It is required for targeted recruitment of the BBSome, CEP290, RAB8, and SSTR3 to the cilia (By similarity).</text>
</comment>
<comment type="subunit">
    <text evidence="1 4 5 6">Interacts with SSX2 and SSX3 (By similarity). Does not interact with SSX1 and SSX4 (By similarity). Interacts with afadin and alpha-actinin (PubMed:12446711). Interacts with VAV2 (PubMed:22027834). Interacts with PCM1 (PubMed:24356449). Interacts with WRAP73 (By similarity).</text>
</comment>
<comment type="interaction">
    <interactant intactId="EBI-6654049">
        <id>Q8VC66</id>
    </interactant>
    <interactant intactId="EBI-351710">
        <id>P12814</id>
        <label>ACTN1</label>
    </interactant>
    <organismsDiffer>true</organismsDiffer>
    <experiments>3</experiments>
</comment>
<comment type="interaction">
    <interactant intactId="EBI-6654049">
        <id>Q8VC66</id>
    </interactant>
    <interactant intactId="EBI-6654073">
        <id>O35889</id>
        <label>Afdn</label>
    </interactant>
    <organismsDiffer>true</organismsDiffer>
    <experiments>4</experiments>
</comment>
<comment type="interaction">
    <interactant intactId="EBI-6654049">
        <id>Q8VC66</id>
    </interactant>
    <interactant intactId="EBI-1054904">
        <id>Q9P2S5</id>
        <label>WRAP73</label>
    </interactant>
    <organismsDiffer>true</organismsDiffer>
    <experiments>4</experiments>
</comment>
<comment type="subcellular location">
    <subcellularLocation>
        <location evidence="4">Cell junction</location>
        <location evidence="4">Adherens junction</location>
    </subcellularLocation>
    <subcellularLocation>
        <location evidence="1">Nucleus</location>
    </subcellularLocation>
    <subcellularLocation>
        <location evidence="6">Cytoplasm</location>
        <location evidence="6">Cytoskeleton</location>
        <location evidence="6">Microtubule organizing center</location>
        <location evidence="6">Centrosome</location>
        <location evidence="6">Centriolar satellite</location>
    </subcellularLocation>
    <subcellularLocation>
        <location evidence="6">Cytoplasm</location>
        <location evidence="6">Cytoskeleton</location>
        <location evidence="6">Cilium basal body</location>
    </subcellularLocation>
    <text>Not found at cell-matrix AJs.</text>
</comment>
<comment type="tissue specificity">
    <text evidence="4">Widely expressed.</text>
</comment>
<comment type="similarity">
    <text evidence="7">Belongs to the ADIP family.</text>
</comment>
<protein>
    <recommendedName>
        <fullName>Afadin- and alpha-actinin-binding protein</fullName>
        <shortName>ADIP</shortName>
    </recommendedName>
    <alternativeName>
        <fullName>Afadin DIL domain-interacting protein</fullName>
    </alternativeName>
</protein>
<evidence type="ECO:0000250" key="1">
    <source>
        <dbReference type="UniProtKB" id="Q9Y2D8"/>
    </source>
</evidence>
<evidence type="ECO:0000255" key="2"/>
<evidence type="ECO:0000256" key="3">
    <source>
        <dbReference type="SAM" id="MobiDB-lite"/>
    </source>
</evidence>
<evidence type="ECO:0000269" key="4">
    <source>
    </source>
</evidence>
<evidence type="ECO:0000269" key="5">
    <source>
    </source>
</evidence>
<evidence type="ECO:0000269" key="6">
    <source>
    </source>
</evidence>
<evidence type="ECO:0000305" key="7"/>
<evidence type="ECO:0007744" key="8">
    <source>
    </source>
</evidence>
<reference key="1">
    <citation type="journal article" date="2003" name="J. Biol. Chem.">
        <title>ADIP, a novel afadin- and alpha-actinin-binding protein localized at cell-cell adherens junctions.</title>
        <authorList>
            <person name="Asada M."/>
            <person name="Irie K."/>
            <person name="Morimoto K."/>
            <person name="Yamada A."/>
            <person name="Ikeda W."/>
            <person name="Takeuchi M."/>
            <person name="Takai Y."/>
        </authorList>
    </citation>
    <scope>NUCLEOTIDE SEQUENCE [MRNA]</scope>
    <scope>FUNCTION</scope>
    <scope>SUBCELLULAR LOCATION</scope>
    <scope>INTERACTION WITH AFIDIN AND ALPHA-ACTININ</scope>
    <scope>TISSUE SPECIFICITY</scope>
    <source>
        <strain>C57BL/6J</strain>
    </source>
</reference>
<reference key="2">
    <citation type="journal article" date="2005" name="Science">
        <title>The transcriptional landscape of the mammalian genome.</title>
        <authorList>
            <person name="Carninci P."/>
            <person name="Kasukawa T."/>
            <person name="Katayama S."/>
            <person name="Gough J."/>
            <person name="Frith M.C."/>
            <person name="Maeda N."/>
            <person name="Oyama R."/>
            <person name="Ravasi T."/>
            <person name="Lenhard B."/>
            <person name="Wells C."/>
            <person name="Kodzius R."/>
            <person name="Shimokawa K."/>
            <person name="Bajic V.B."/>
            <person name="Brenner S.E."/>
            <person name="Batalov S."/>
            <person name="Forrest A.R."/>
            <person name="Zavolan M."/>
            <person name="Davis M.J."/>
            <person name="Wilming L.G."/>
            <person name="Aidinis V."/>
            <person name="Allen J.E."/>
            <person name="Ambesi-Impiombato A."/>
            <person name="Apweiler R."/>
            <person name="Aturaliya R.N."/>
            <person name="Bailey T.L."/>
            <person name="Bansal M."/>
            <person name="Baxter L."/>
            <person name="Beisel K.W."/>
            <person name="Bersano T."/>
            <person name="Bono H."/>
            <person name="Chalk A.M."/>
            <person name="Chiu K.P."/>
            <person name="Choudhary V."/>
            <person name="Christoffels A."/>
            <person name="Clutterbuck D.R."/>
            <person name="Crowe M.L."/>
            <person name="Dalla E."/>
            <person name="Dalrymple B.P."/>
            <person name="de Bono B."/>
            <person name="Della Gatta G."/>
            <person name="di Bernardo D."/>
            <person name="Down T."/>
            <person name="Engstrom P."/>
            <person name="Fagiolini M."/>
            <person name="Faulkner G."/>
            <person name="Fletcher C.F."/>
            <person name="Fukushima T."/>
            <person name="Furuno M."/>
            <person name="Futaki S."/>
            <person name="Gariboldi M."/>
            <person name="Georgii-Hemming P."/>
            <person name="Gingeras T.R."/>
            <person name="Gojobori T."/>
            <person name="Green R.E."/>
            <person name="Gustincich S."/>
            <person name="Harbers M."/>
            <person name="Hayashi Y."/>
            <person name="Hensch T.K."/>
            <person name="Hirokawa N."/>
            <person name="Hill D."/>
            <person name="Huminiecki L."/>
            <person name="Iacono M."/>
            <person name="Ikeo K."/>
            <person name="Iwama A."/>
            <person name="Ishikawa T."/>
            <person name="Jakt M."/>
            <person name="Kanapin A."/>
            <person name="Katoh M."/>
            <person name="Kawasawa Y."/>
            <person name="Kelso J."/>
            <person name="Kitamura H."/>
            <person name="Kitano H."/>
            <person name="Kollias G."/>
            <person name="Krishnan S.P."/>
            <person name="Kruger A."/>
            <person name="Kummerfeld S.K."/>
            <person name="Kurochkin I.V."/>
            <person name="Lareau L.F."/>
            <person name="Lazarevic D."/>
            <person name="Lipovich L."/>
            <person name="Liu J."/>
            <person name="Liuni S."/>
            <person name="McWilliam S."/>
            <person name="Madan Babu M."/>
            <person name="Madera M."/>
            <person name="Marchionni L."/>
            <person name="Matsuda H."/>
            <person name="Matsuzawa S."/>
            <person name="Miki H."/>
            <person name="Mignone F."/>
            <person name="Miyake S."/>
            <person name="Morris K."/>
            <person name="Mottagui-Tabar S."/>
            <person name="Mulder N."/>
            <person name="Nakano N."/>
            <person name="Nakauchi H."/>
            <person name="Ng P."/>
            <person name="Nilsson R."/>
            <person name="Nishiguchi S."/>
            <person name="Nishikawa S."/>
            <person name="Nori F."/>
            <person name="Ohara O."/>
            <person name="Okazaki Y."/>
            <person name="Orlando V."/>
            <person name="Pang K.C."/>
            <person name="Pavan W.J."/>
            <person name="Pavesi G."/>
            <person name="Pesole G."/>
            <person name="Petrovsky N."/>
            <person name="Piazza S."/>
            <person name="Reed J."/>
            <person name="Reid J.F."/>
            <person name="Ring B.Z."/>
            <person name="Ringwald M."/>
            <person name="Rost B."/>
            <person name="Ruan Y."/>
            <person name="Salzberg S.L."/>
            <person name="Sandelin A."/>
            <person name="Schneider C."/>
            <person name="Schoenbach C."/>
            <person name="Sekiguchi K."/>
            <person name="Semple C.A."/>
            <person name="Seno S."/>
            <person name="Sessa L."/>
            <person name="Sheng Y."/>
            <person name="Shibata Y."/>
            <person name="Shimada H."/>
            <person name="Shimada K."/>
            <person name="Silva D."/>
            <person name="Sinclair B."/>
            <person name="Sperling S."/>
            <person name="Stupka E."/>
            <person name="Sugiura K."/>
            <person name="Sultana R."/>
            <person name="Takenaka Y."/>
            <person name="Taki K."/>
            <person name="Tammoja K."/>
            <person name="Tan S.L."/>
            <person name="Tang S."/>
            <person name="Taylor M.S."/>
            <person name="Tegner J."/>
            <person name="Teichmann S.A."/>
            <person name="Ueda H.R."/>
            <person name="van Nimwegen E."/>
            <person name="Verardo R."/>
            <person name="Wei C.L."/>
            <person name="Yagi K."/>
            <person name="Yamanishi H."/>
            <person name="Zabarovsky E."/>
            <person name="Zhu S."/>
            <person name="Zimmer A."/>
            <person name="Hide W."/>
            <person name="Bult C."/>
            <person name="Grimmond S.M."/>
            <person name="Teasdale R.D."/>
            <person name="Liu E.T."/>
            <person name="Brusic V."/>
            <person name="Quackenbush J."/>
            <person name="Wahlestedt C."/>
            <person name="Mattick J.S."/>
            <person name="Hume D.A."/>
            <person name="Kai C."/>
            <person name="Sasaki D."/>
            <person name="Tomaru Y."/>
            <person name="Fukuda S."/>
            <person name="Kanamori-Katayama M."/>
            <person name="Suzuki M."/>
            <person name="Aoki J."/>
            <person name="Arakawa T."/>
            <person name="Iida J."/>
            <person name="Imamura K."/>
            <person name="Itoh M."/>
            <person name="Kato T."/>
            <person name="Kawaji H."/>
            <person name="Kawagashira N."/>
            <person name="Kawashima T."/>
            <person name="Kojima M."/>
            <person name="Kondo S."/>
            <person name="Konno H."/>
            <person name="Nakano K."/>
            <person name="Ninomiya N."/>
            <person name="Nishio T."/>
            <person name="Okada M."/>
            <person name="Plessy C."/>
            <person name="Shibata K."/>
            <person name="Shiraki T."/>
            <person name="Suzuki S."/>
            <person name="Tagami M."/>
            <person name="Waki K."/>
            <person name="Watahiki A."/>
            <person name="Okamura-Oho Y."/>
            <person name="Suzuki H."/>
            <person name="Kawai J."/>
            <person name="Hayashizaki Y."/>
        </authorList>
    </citation>
    <scope>NUCLEOTIDE SEQUENCE [LARGE SCALE MRNA]</scope>
    <source>
        <strain>C57BL/6J</strain>
        <tissue>Brain cortex</tissue>
        <tissue>Cerebellum</tissue>
        <tissue>Testis</tissue>
    </source>
</reference>
<reference key="3">
    <citation type="journal article" date="2004" name="Genome Res.">
        <title>The status, quality, and expansion of the NIH full-length cDNA project: the Mammalian Gene Collection (MGC).</title>
        <authorList>
            <consortium name="The MGC Project Team"/>
        </authorList>
    </citation>
    <scope>NUCLEOTIDE SEQUENCE [LARGE SCALE MRNA]</scope>
    <source>
        <strain>FVB/N</strain>
        <tissue>Mammary gland</tissue>
        <tissue>Salivary gland</tissue>
    </source>
</reference>
<reference key="4">
    <citation type="journal article" date="2010" name="Cell">
        <title>A tissue-specific atlas of mouse protein phosphorylation and expression.</title>
        <authorList>
            <person name="Huttlin E.L."/>
            <person name="Jedrychowski M.P."/>
            <person name="Elias J.E."/>
            <person name="Goswami T."/>
            <person name="Rad R."/>
            <person name="Beausoleil S.A."/>
            <person name="Villen J."/>
            <person name="Haas W."/>
            <person name="Sowa M.E."/>
            <person name="Gygi S.P."/>
        </authorList>
    </citation>
    <scope>PHOSPHORYLATION [LARGE SCALE ANALYSIS] AT SER-313 AND SER-319</scope>
    <scope>IDENTIFICATION BY MASS SPECTROMETRY [LARGE SCALE ANALYSIS]</scope>
    <source>
        <tissue>Brain</tissue>
        <tissue>Kidney</tissue>
        <tissue>Spleen</tissue>
        <tissue>Testis</tissue>
    </source>
</reference>
<reference key="5">
    <citation type="journal article" date="2011" name="J. Biol. Chem.">
        <title>Role of scaffold protein afadin dilute domain-interacting protein (ADIP) in platelet-derived growth factor-induced cell movement by activating Rac protein through Vav2 protein.</title>
        <authorList>
            <person name="Fukumoto Y."/>
            <person name="Kurita S."/>
            <person name="Takai Y."/>
            <person name="Ogita H."/>
        </authorList>
    </citation>
    <scope>FUNCTION</scope>
    <scope>INTERACTION WITH VAV2</scope>
</reference>
<reference key="6">
    <citation type="journal article" date="2014" name="Mol. Biol. Cell">
        <title>The novel centriolar satellite protein SSX2IP targets Cep290 to the ciliary transition zone.</title>
        <authorList>
            <person name="Klinger M."/>
            <person name="Wang W."/>
            <person name="Kuhns S."/>
            <person name="Baerenz F."/>
            <person name="Draeger-Meurer S."/>
            <person name="Pereira G."/>
            <person name="Gruss O.J."/>
        </authorList>
    </citation>
    <scope>SUBCELLULAR LOCATION</scope>
    <scope>INTERACTION WITH PCM1</scope>
</reference>
<sequence length="615" mass="70956">MGDWMTVTDPVLCTENKNLSQYTSETKMSPSSLYSQQVLCSSVPLSKNVHGVFGVFCTGENIEQSISYLDQELTTFGFPSLYEESKSKEAKRELNIVAVLNCMNELLVLQRKNLLAQESVETQNLKLGSDMDHLQSCYAKLKEQLETSRREMIGLQERDRQLQCKNRSLHQLLKNEKDEVQKLQNIIASRATQYNHDVKRKEREYNKLKERLHQLVMNKKDKNIAMDVLNYVGRADGKRGSWRTDKTEARNEDEMYKILLNDYEYRQKQILMENAELKKVLQQMKKEMISLLSPQKKKPRERAEDGTGTVAISDIEDDSGELSRDSVWGLSCDTVREQLTNSIRKQWRILKSHVEKLDNQASKVHSEGLNEEDVISRQDHEQETEKLELEIERCKEMIKAQQQLLQQQLATTCDDDTTSLLRDCYLLEEKERLKEEWTLFKEQKKNFERERRSFTEAAIRLGLERKAFEEERASWVKQQFLNMTNFDHQNSENVKLFSAFSGSSDPDNLIVHSRPRQKKLHSVANGVPACTSKLTKSLPASPSTSDFRQTHSCVSEHSSISVLNITPEESKPSEVARESTDQKWSVQSRPSSREGCYSGCSSAFRSAHGDRDDLP</sequence>
<dbReference type="EMBL" id="AF532969">
    <property type="protein sequence ID" value="AAO15015.1"/>
    <property type="molecule type" value="mRNA"/>
</dbReference>
<dbReference type="EMBL" id="AK049080">
    <property type="protein sequence ID" value="BAC33536.1"/>
    <property type="molecule type" value="mRNA"/>
</dbReference>
<dbReference type="EMBL" id="AK031356">
    <property type="protein sequence ID" value="BAC27363.1"/>
    <property type="molecule type" value="mRNA"/>
</dbReference>
<dbReference type="EMBL" id="AK043865">
    <property type="protein sequence ID" value="BAC31684.1"/>
    <property type="molecule type" value="mRNA"/>
</dbReference>
<dbReference type="EMBL" id="BC021749">
    <property type="protein sequence ID" value="AAH21749.1"/>
    <property type="molecule type" value="mRNA"/>
</dbReference>
<dbReference type="EMBL" id="BC031527">
    <property type="protein sequence ID" value="AAH31527.1"/>
    <property type="molecule type" value="mRNA"/>
</dbReference>
<dbReference type="CCDS" id="CCDS38665.1"/>
<dbReference type="RefSeq" id="NP_001240697.1">
    <property type="nucleotide sequence ID" value="NM_001253768.1"/>
</dbReference>
<dbReference type="RefSeq" id="NP_001240698.1">
    <property type="nucleotide sequence ID" value="NM_001253769.1"/>
</dbReference>
<dbReference type="RefSeq" id="NP_001240699.1">
    <property type="nucleotide sequence ID" value="NM_001253770.1"/>
</dbReference>
<dbReference type="RefSeq" id="NP_001342590.1">
    <property type="nucleotide sequence ID" value="NM_001355661.1"/>
</dbReference>
<dbReference type="RefSeq" id="NP_001398033.1">
    <property type="nucleotide sequence ID" value="NM_001411104.1"/>
</dbReference>
<dbReference type="RefSeq" id="NP_001398034.1">
    <property type="nucleotide sequence ID" value="NM_001411105.1"/>
</dbReference>
<dbReference type="RefSeq" id="NP_001398036.1">
    <property type="nucleotide sequence ID" value="NM_001411107.1"/>
</dbReference>
<dbReference type="RefSeq" id="NP_001398037.1">
    <property type="nucleotide sequence ID" value="NM_001411108.1"/>
</dbReference>
<dbReference type="RefSeq" id="NP_001398038.1">
    <property type="nucleotide sequence ID" value="NM_001411109.1"/>
</dbReference>
<dbReference type="RefSeq" id="NP_620083.1">
    <property type="nucleotide sequence ID" value="NM_138744.4"/>
</dbReference>
<dbReference type="RefSeq" id="XP_006502467.1">
    <property type="nucleotide sequence ID" value="XM_006502404.3"/>
</dbReference>
<dbReference type="RefSeq" id="XP_006502468.1">
    <property type="nucleotide sequence ID" value="XM_006502405.3"/>
</dbReference>
<dbReference type="RefSeq" id="XP_006502469.1">
    <property type="nucleotide sequence ID" value="XM_006502406.3"/>
</dbReference>
<dbReference type="SMR" id="Q8VC66"/>
<dbReference type="FunCoup" id="Q8VC66">
    <property type="interactions" value="429"/>
</dbReference>
<dbReference type="IntAct" id="Q8VC66">
    <property type="interactions" value="7"/>
</dbReference>
<dbReference type="STRING" id="10090.ENSMUSP00000101759"/>
<dbReference type="iPTMnet" id="Q8VC66"/>
<dbReference type="PhosphoSitePlus" id="Q8VC66"/>
<dbReference type="PaxDb" id="10090-ENSMUSP00000101759"/>
<dbReference type="ProteomicsDB" id="285726"/>
<dbReference type="Antibodypedia" id="19778">
    <property type="antibodies" value="236 antibodies from 29 providers"/>
</dbReference>
<dbReference type="DNASU" id="99167"/>
<dbReference type="Ensembl" id="ENSMUST00000106153.9">
    <property type="protein sequence ID" value="ENSMUSP00000101759.3"/>
    <property type="gene ID" value="ENSMUSG00000036825.13"/>
</dbReference>
<dbReference type="GeneID" id="99167"/>
<dbReference type="KEGG" id="mmu:99167"/>
<dbReference type="UCSC" id="uc008rrb.1">
    <property type="organism name" value="mouse"/>
</dbReference>
<dbReference type="AGR" id="MGI:2139150"/>
<dbReference type="CTD" id="117178"/>
<dbReference type="MGI" id="MGI:2139150">
    <property type="gene designation" value="Ssx2ip"/>
</dbReference>
<dbReference type="VEuPathDB" id="HostDB:ENSMUSG00000036825"/>
<dbReference type="eggNOG" id="ENOG502QQJF">
    <property type="taxonomic scope" value="Eukaryota"/>
</dbReference>
<dbReference type="GeneTree" id="ENSGT00390000007688"/>
<dbReference type="HOGENOM" id="CLU_031049_0_0_1"/>
<dbReference type="InParanoid" id="Q8VC66"/>
<dbReference type="OMA" id="QHCKEMI"/>
<dbReference type="OrthoDB" id="312015at2759"/>
<dbReference type="TreeFam" id="TF332889"/>
<dbReference type="BioGRID-ORCS" id="99167">
    <property type="hits" value="0 hits in 77 CRISPR screens"/>
</dbReference>
<dbReference type="ChiTaRS" id="Ssx2ip">
    <property type="organism name" value="mouse"/>
</dbReference>
<dbReference type="PRO" id="PR:Q8VC66"/>
<dbReference type="Proteomes" id="UP000000589">
    <property type="component" value="Chromosome 3"/>
</dbReference>
<dbReference type="RNAct" id="Q8VC66">
    <property type="molecule type" value="protein"/>
</dbReference>
<dbReference type="Bgee" id="ENSMUSG00000036825">
    <property type="expression patterns" value="Expressed in ileal epithelium and 263 other cell types or tissues"/>
</dbReference>
<dbReference type="ExpressionAtlas" id="Q8VC66">
    <property type="expression patterns" value="baseline and differential"/>
</dbReference>
<dbReference type="GO" id="GO:0005912">
    <property type="term" value="C:adherens junction"/>
    <property type="evidence" value="ECO:0007669"/>
    <property type="project" value="UniProtKB-SubCell"/>
</dbReference>
<dbReference type="GO" id="GO:0031252">
    <property type="term" value="C:cell leading edge"/>
    <property type="evidence" value="ECO:0000314"/>
    <property type="project" value="MGI"/>
</dbReference>
<dbReference type="GO" id="GO:0034451">
    <property type="term" value="C:centriolar satellite"/>
    <property type="evidence" value="ECO:0000314"/>
    <property type="project" value="UniProtKB"/>
</dbReference>
<dbReference type="GO" id="GO:0036064">
    <property type="term" value="C:ciliary basal body"/>
    <property type="evidence" value="ECO:0000314"/>
    <property type="project" value="UniProtKB"/>
</dbReference>
<dbReference type="GO" id="GO:0005737">
    <property type="term" value="C:cytoplasm"/>
    <property type="evidence" value="ECO:0007669"/>
    <property type="project" value="UniProtKB-KW"/>
</dbReference>
<dbReference type="GO" id="GO:0005634">
    <property type="term" value="C:nucleus"/>
    <property type="evidence" value="ECO:0007669"/>
    <property type="project" value="UniProtKB-SubCell"/>
</dbReference>
<dbReference type="GO" id="GO:0032991">
    <property type="term" value="C:protein-containing complex"/>
    <property type="evidence" value="ECO:0007669"/>
    <property type="project" value="Ensembl"/>
</dbReference>
<dbReference type="GO" id="GO:0019904">
    <property type="term" value="F:protein domain specific binding"/>
    <property type="evidence" value="ECO:0007669"/>
    <property type="project" value="Ensembl"/>
</dbReference>
<dbReference type="GO" id="GO:0007155">
    <property type="term" value="P:cell adhesion"/>
    <property type="evidence" value="ECO:0007669"/>
    <property type="project" value="UniProtKB-KW"/>
</dbReference>
<dbReference type="GO" id="GO:0007098">
    <property type="term" value="P:centrosome cycle"/>
    <property type="evidence" value="ECO:0000250"/>
    <property type="project" value="UniProtKB"/>
</dbReference>
<dbReference type="GO" id="GO:0060271">
    <property type="term" value="P:cilium assembly"/>
    <property type="evidence" value="ECO:0000250"/>
    <property type="project" value="UniProtKB"/>
</dbReference>
<dbReference type="GO" id="GO:0035735">
    <property type="term" value="P:intraciliary transport involved in cilium assembly"/>
    <property type="evidence" value="ECO:0000250"/>
    <property type="project" value="UniProtKB"/>
</dbReference>
<dbReference type="GO" id="GO:2000145">
    <property type="term" value="P:regulation of cell motility"/>
    <property type="evidence" value="ECO:0000315"/>
    <property type="project" value="MGI"/>
</dbReference>
<dbReference type="GO" id="GO:0035020">
    <property type="term" value="P:regulation of Rac protein signal transduction"/>
    <property type="evidence" value="ECO:0000315"/>
    <property type="project" value="MGI"/>
</dbReference>
<dbReference type="InterPro" id="IPR052300">
    <property type="entry name" value="Adhesion_Centrosome_assoc"/>
</dbReference>
<dbReference type="InterPro" id="IPR021622">
    <property type="entry name" value="Afadin/alpha-actinin-bd"/>
</dbReference>
<dbReference type="PANTHER" id="PTHR46507">
    <property type="entry name" value="AFADIN- AND ALPHA-ACTININ-BINDING PROTEIN"/>
    <property type="match status" value="1"/>
</dbReference>
<dbReference type="PANTHER" id="PTHR46507:SF1">
    <property type="entry name" value="AFADIN- AND ALPHA-ACTININ-BINDING PROTEIN"/>
    <property type="match status" value="1"/>
</dbReference>
<dbReference type="Pfam" id="PF11559">
    <property type="entry name" value="ADIP"/>
    <property type="match status" value="1"/>
</dbReference>
<keyword id="KW-0130">Cell adhesion</keyword>
<keyword id="KW-0965">Cell junction</keyword>
<keyword id="KW-0966">Cell projection</keyword>
<keyword id="KW-0970">Cilium biogenesis/degradation</keyword>
<keyword id="KW-0175">Coiled coil</keyword>
<keyword id="KW-0963">Cytoplasm</keyword>
<keyword id="KW-0206">Cytoskeleton</keyword>
<keyword id="KW-0539">Nucleus</keyword>
<keyword id="KW-0597">Phosphoprotein</keyword>
<keyword id="KW-1185">Reference proteome</keyword>
<organism>
    <name type="scientific">Mus musculus</name>
    <name type="common">Mouse</name>
    <dbReference type="NCBI Taxonomy" id="10090"/>
    <lineage>
        <taxon>Eukaryota</taxon>
        <taxon>Metazoa</taxon>
        <taxon>Chordata</taxon>
        <taxon>Craniata</taxon>
        <taxon>Vertebrata</taxon>
        <taxon>Euteleostomi</taxon>
        <taxon>Mammalia</taxon>
        <taxon>Eutheria</taxon>
        <taxon>Euarchontoglires</taxon>
        <taxon>Glires</taxon>
        <taxon>Rodentia</taxon>
        <taxon>Myomorpha</taxon>
        <taxon>Muroidea</taxon>
        <taxon>Muridae</taxon>
        <taxon>Murinae</taxon>
        <taxon>Mus</taxon>
        <taxon>Mus</taxon>
    </lineage>
</organism>
<proteinExistence type="evidence at protein level"/>
<accession>Q8VC66</accession>
<accession>Q8BG59</accession>
<accession>Q8C7X0</accession>
<accession>Q8K2F7</accession>
<feature type="chain" id="PRO_0000064456" description="Afadin- and alpha-actinin-binding protein">
    <location>
        <begin position="1"/>
        <end position="615"/>
    </location>
</feature>
<feature type="region of interest" description="Disordered" evidence="3">
    <location>
        <begin position="293"/>
        <end position="316"/>
    </location>
</feature>
<feature type="region of interest" description="Disordered" evidence="3">
    <location>
        <begin position="567"/>
        <end position="615"/>
    </location>
</feature>
<feature type="coiled-coil region" evidence="2">
    <location>
        <begin position="126"/>
        <end position="227"/>
    </location>
</feature>
<feature type="coiled-coil region" evidence="2">
    <location>
        <begin position="266"/>
        <end position="293"/>
    </location>
</feature>
<feature type="coiled-coil region" evidence="2">
    <location>
        <begin position="375"/>
        <end position="461"/>
    </location>
</feature>
<feature type="compositionally biased region" description="Basic and acidic residues" evidence="3">
    <location>
        <begin position="568"/>
        <end position="581"/>
    </location>
</feature>
<feature type="modified residue" description="Phosphoserine" evidence="1">
    <location>
        <position position="290"/>
    </location>
</feature>
<feature type="modified residue" description="Phosphoserine" evidence="1">
    <location>
        <position position="293"/>
    </location>
</feature>
<feature type="modified residue" description="Phosphoserine" evidence="8">
    <location>
        <position position="313"/>
    </location>
</feature>
<feature type="modified residue" description="Phosphoserine" evidence="8">
    <location>
        <position position="319"/>
    </location>
</feature>
<feature type="modified residue" description="Phosphoserine" evidence="1">
    <location>
        <position position="537"/>
    </location>
</feature>
<feature type="modified residue" description="Phosphoserine" evidence="1">
    <location>
        <position position="541"/>
    </location>
</feature>
<feature type="modified residue" description="Phosphoserine" evidence="1">
    <location>
        <position position="543"/>
    </location>
</feature>
<feature type="sequence conflict" description="In Ref. 3; AAH31527." evidence="7" ref="3">
    <original>K</original>
    <variation>R</variation>
    <location>
        <position position="47"/>
    </location>
</feature>
<feature type="sequence conflict" description="In Ref. 2; BAC33536/BAC27363." evidence="7" ref="2">
    <location>
        <position position="406"/>
    </location>
</feature>
<feature type="sequence conflict" description="In Ref. 2; BAC33536." evidence="7" ref="2">
    <original>S</original>
    <variation>SKPG</variation>
    <location>
        <position position="503"/>
    </location>
</feature>
<name>ADIP_MOUSE</name>
<gene>
    <name type="primary">Ssx2ip</name>
</gene>